<keyword id="KW-0156">Chromatin regulator</keyword>
<keyword id="KW-0223">Dioxygenase</keyword>
<keyword id="KW-0408">Iron</keyword>
<keyword id="KW-0479">Metal-binding</keyword>
<keyword id="KW-0539">Nucleus</keyword>
<keyword id="KW-0560">Oxidoreductase</keyword>
<keyword id="KW-1185">Reference proteome</keyword>
<keyword id="KW-0804">Transcription</keyword>
<keyword id="KW-0805">Transcription regulation</keyword>
<accession>Q60V67</accession>
<accession>A8XW64</accession>
<accession>E3CU71</accession>
<evidence type="ECO:0000250" key="1"/>
<evidence type="ECO:0000250" key="2">
    <source>
        <dbReference type="UniProtKB" id="P40034"/>
    </source>
</evidence>
<evidence type="ECO:0000255" key="3">
    <source>
        <dbReference type="PROSITE-ProRule" id="PRU00538"/>
    </source>
</evidence>
<evidence type="ECO:0000256" key="4">
    <source>
        <dbReference type="SAM" id="MobiDB-lite"/>
    </source>
</evidence>
<evidence type="ECO:0000305" key="5"/>
<comment type="function">
    <text evidence="2">Histone demethylase that specifically demethylates 'Lys-36' of histone H3, thereby playing a central role in histone code.</text>
</comment>
<comment type="catalytic activity">
    <reaction evidence="2">
        <text>N(6),N(6)-dimethyl-L-lysyl(36)-[histone H3] + 2 2-oxoglutarate + 2 O2 = L-lysyl(36)-[histone H3] + 2 formaldehyde + 2 succinate + 2 CO2</text>
        <dbReference type="Rhea" id="RHEA:42032"/>
        <dbReference type="Rhea" id="RHEA-COMP:9785"/>
        <dbReference type="Rhea" id="RHEA-COMP:9787"/>
        <dbReference type="ChEBI" id="CHEBI:15379"/>
        <dbReference type="ChEBI" id="CHEBI:16526"/>
        <dbReference type="ChEBI" id="CHEBI:16810"/>
        <dbReference type="ChEBI" id="CHEBI:16842"/>
        <dbReference type="ChEBI" id="CHEBI:29969"/>
        <dbReference type="ChEBI" id="CHEBI:30031"/>
        <dbReference type="ChEBI" id="CHEBI:61976"/>
        <dbReference type="EC" id="1.14.11.27"/>
    </reaction>
</comment>
<comment type="cofactor">
    <cofactor evidence="1">
        <name>Fe(2+)</name>
        <dbReference type="ChEBI" id="CHEBI:29033"/>
    </cofactor>
    <text evidence="1">Binds 1 Fe(2+) ion per subunit.</text>
</comment>
<comment type="subcellular location">
    <subcellularLocation>
        <location evidence="1">Nucleus</location>
    </subcellularLocation>
</comment>
<comment type="domain">
    <text evidence="1">The JmjC domain mediates the demethylation activity.</text>
</comment>
<comment type="similarity">
    <text evidence="5">Belongs to the JHDM1 histone demethylase family.</text>
</comment>
<protein>
    <recommendedName>
        <fullName>JmjC domain-containing histone demethylation protein 1</fullName>
        <ecNumber evidence="2">1.14.11.27</ecNumber>
    </recommendedName>
    <alternativeName>
        <fullName>[Histone-H3]-lysine-36 demethylase 1</fullName>
    </alternativeName>
</protein>
<proteinExistence type="inferred from homology"/>
<reference key="1">
    <citation type="journal article" date="2003" name="PLoS Biol.">
        <title>The genome sequence of Caenorhabditis briggsae: a platform for comparative genomics.</title>
        <authorList>
            <person name="Stein L.D."/>
            <person name="Bao Z."/>
            <person name="Blasiar D."/>
            <person name="Blumenthal T."/>
            <person name="Brent M.R."/>
            <person name="Chen N."/>
            <person name="Chinwalla A."/>
            <person name="Clarke L."/>
            <person name="Clee C."/>
            <person name="Coghlan A."/>
            <person name="Coulson A."/>
            <person name="D'Eustachio P."/>
            <person name="Fitch D.H.A."/>
            <person name="Fulton L.A."/>
            <person name="Fulton R.E."/>
            <person name="Griffiths-Jones S."/>
            <person name="Harris T.W."/>
            <person name="Hillier L.W."/>
            <person name="Kamath R."/>
            <person name="Kuwabara P.E."/>
            <person name="Mardis E.R."/>
            <person name="Marra M.A."/>
            <person name="Miner T.L."/>
            <person name="Minx P."/>
            <person name="Mullikin J.C."/>
            <person name="Plumb R.W."/>
            <person name="Rogers J."/>
            <person name="Schein J.E."/>
            <person name="Sohrmann M."/>
            <person name="Spieth J."/>
            <person name="Stajich J.E."/>
            <person name="Wei C."/>
            <person name="Willey D."/>
            <person name="Wilson R.K."/>
            <person name="Durbin R.M."/>
            <person name="Waterston R.H."/>
        </authorList>
    </citation>
    <scope>NUCLEOTIDE SEQUENCE [LARGE SCALE GENOMIC DNA]</scope>
    <source>
        <strain>AF16</strain>
    </source>
</reference>
<gene>
    <name type="primary">jhdm-1</name>
    <name type="ORF">CBG19679</name>
</gene>
<name>JHD1_CAEBR</name>
<feature type="chain" id="PRO_0000226788" description="JmjC domain-containing histone demethylation protein 1">
    <location>
        <begin position="1"/>
        <end position="1063"/>
    </location>
</feature>
<feature type="domain" description="JmjC" evidence="3">
    <location>
        <begin position="86"/>
        <end position="266"/>
    </location>
</feature>
<feature type="region of interest" description="Disordered" evidence="4">
    <location>
        <begin position="379"/>
        <end position="400"/>
    </location>
</feature>
<feature type="region of interest" description="Disordered" evidence="4">
    <location>
        <begin position="554"/>
        <end position="750"/>
    </location>
</feature>
<feature type="region of interest" description="Disordered" evidence="4">
    <location>
        <begin position="776"/>
        <end position="1040"/>
    </location>
</feature>
<feature type="compositionally biased region" description="Acidic residues" evidence="4">
    <location>
        <begin position="379"/>
        <end position="389"/>
    </location>
</feature>
<feature type="compositionally biased region" description="Basic and acidic residues" evidence="4">
    <location>
        <begin position="390"/>
        <end position="400"/>
    </location>
</feature>
<feature type="compositionally biased region" description="Acidic residues" evidence="4">
    <location>
        <begin position="594"/>
        <end position="605"/>
    </location>
</feature>
<feature type="compositionally biased region" description="Acidic residues" evidence="4">
    <location>
        <begin position="613"/>
        <end position="631"/>
    </location>
</feature>
<feature type="compositionally biased region" description="Low complexity" evidence="4">
    <location>
        <begin position="636"/>
        <end position="646"/>
    </location>
</feature>
<feature type="compositionally biased region" description="Basic and acidic residues" evidence="4">
    <location>
        <begin position="647"/>
        <end position="665"/>
    </location>
</feature>
<feature type="compositionally biased region" description="Basic and acidic residues" evidence="4">
    <location>
        <begin position="674"/>
        <end position="712"/>
    </location>
</feature>
<feature type="compositionally biased region" description="Basic and acidic residues" evidence="4">
    <location>
        <begin position="776"/>
        <end position="806"/>
    </location>
</feature>
<feature type="compositionally biased region" description="Basic and acidic residues" evidence="4">
    <location>
        <begin position="813"/>
        <end position="835"/>
    </location>
</feature>
<feature type="compositionally biased region" description="Basic and acidic residues" evidence="4">
    <location>
        <begin position="892"/>
        <end position="902"/>
    </location>
</feature>
<feature type="compositionally biased region" description="Low complexity" evidence="4">
    <location>
        <begin position="926"/>
        <end position="937"/>
    </location>
</feature>
<feature type="compositionally biased region" description="Polar residues" evidence="4">
    <location>
        <begin position="950"/>
        <end position="963"/>
    </location>
</feature>
<feature type="compositionally biased region" description="Polar residues" evidence="4">
    <location>
        <begin position="973"/>
        <end position="982"/>
    </location>
</feature>
<feature type="compositionally biased region" description="Pro residues" evidence="4">
    <location>
        <begin position="1005"/>
        <end position="1016"/>
    </location>
</feature>
<feature type="compositionally biased region" description="Polar residues" evidence="4">
    <location>
        <begin position="1020"/>
        <end position="1030"/>
    </location>
</feature>
<feature type="compositionally biased region" description="Basic and acidic residues" evidence="4">
    <location>
        <begin position="1031"/>
        <end position="1040"/>
    </location>
</feature>
<feature type="binding site" evidence="1">
    <location>
        <position position="160"/>
    </location>
    <ligand>
        <name>substrate</name>
    </ligand>
</feature>
<feature type="binding site" evidence="3">
    <location>
        <position position="163"/>
    </location>
    <ligand>
        <name>Fe cation</name>
        <dbReference type="ChEBI" id="CHEBI:24875"/>
        <note>catalytic</note>
    </ligand>
</feature>
<feature type="binding site" evidence="3">
    <location>
        <position position="165"/>
    </location>
    <ligand>
        <name>Fe cation</name>
        <dbReference type="ChEBI" id="CHEBI:24875"/>
        <note>catalytic</note>
    </ligand>
</feature>
<feature type="binding site" evidence="1">
    <location>
        <position position="180"/>
    </location>
    <ligand>
        <name>substrate</name>
    </ligand>
</feature>
<feature type="binding site" evidence="3">
    <location>
        <position position="234"/>
    </location>
    <ligand>
        <name>Fe cation</name>
        <dbReference type="ChEBI" id="CHEBI:24875"/>
        <note>catalytic</note>
    </ligand>
</feature>
<organism>
    <name type="scientific">Caenorhabditis briggsae</name>
    <dbReference type="NCBI Taxonomy" id="6238"/>
    <lineage>
        <taxon>Eukaryota</taxon>
        <taxon>Metazoa</taxon>
        <taxon>Ecdysozoa</taxon>
        <taxon>Nematoda</taxon>
        <taxon>Chromadorea</taxon>
        <taxon>Rhabditida</taxon>
        <taxon>Rhabditina</taxon>
        <taxon>Rhabditomorpha</taxon>
        <taxon>Rhabditoidea</taxon>
        <taxon>Rhabditidae</taxon>
        <taxon>Peloderinae</taxon>
        <taxon>Caenorhabditis</taxon>
    </lineage>
</organism>
<sequence length="1063" mass="121968">MEPEELTIEWYEENGLEKPIHFRCDPTRIGMKLPSPSTFTVDSVLELVGGNRMIEVVQVEDQGSVKMTLEEFVEFYKTPRDQRKNLYNVLSLEYSLTPLEDLVNSPALVRQIDWVGNIWPDALRQRWISFNGREKKSYFPHHTFPKVQNYCLMSVANCYTDFHIDFSGTSVWYHVLKGRKVFWLIPPTATNFFIYQEFIKTVSDNAFFGRSVEACHVAVLEPGDTMLIPSGWIHAVYTPDDSLVFGGNFLHSLSCQTQLRVYQVENKLNITRKFRLPYNEELLFYVMADYVKKWTGREYVRPLLVEDAKLDYVGEKWKAAGGHLKKIRFEDYNVEVTSEMVKNEEESEKDEVKVIAMHAGSSNYDNAMISKMSYTEATGLEEEAEDEDVKPETKKEAEERRDAEIDLLAATNSLIFYRNSKHDFIRNKSVPDHKLPIGHEPPVYFNDEEVSRISPRLLEELEALGAYIRRKNRVEVAEGICHPASLINLFNTVLKKRRAELTGKPFQFNQIMPRRYTRAAIETGDYDFEPVRTIEDSRRASQFKVEDFPDELLESDEPDETSRIHLPHQPSSGPLEYIPTPRGEIRENSLGFEPEYDEDMEEYDPAEQVVKEELEEEEEEEEGEEEEEEEYVAPVTRRSSTRGSASTKEEPQEEKEEKEAAPKKEKKEKKVKKEKSSKPEKDTTEAKLKKEKKKKEMERRLRDSELEAELRAAHGGKNAKSKKKPEKPAYVGGLPTAPIQNDPVVSNPYNYDPRMEMMKLGTGQLKSAYRKTKANVELHIEKNLYKLEPKRDESESREPSMEHEDSPTTPHAPYDRYSHYHTENSHFQEDQDSHRTPAKRSKYDNISVDTSESPHIPKKRSLEGRPSPYSVISPPHNRPKLSSPAMFSPSSEPRRSNDRRTSDPAVNAMKKGVYMPPMSRQDKMIAEAASASSSRHSSFSERRPSFIPDLNSSRHSSTDTPMYTPTAPARSSWLPNTSNVTRHSLDDDSPIDVVSESPIDVLNSPPFPRSITPPPVSLSELKSQSNGRKSNYSEDGKRAKIPAREAVAELKTLIGKLKTLNEA</sequence>
<dbReference type="EC" id="1.14.11.27" evidence="2"/>
<dbReference type="EMBL" id="HE600934">
    <property type="protein sequence ID" value="CBX32964.1"/>
    <property type="molecule type" value="Genomic_DNA"/>
</dbReference>
<dbReference type="SMR" id="Q60V67"/>
<dbReference type="FunCoup" id="Q60V67">
    <property type="interactions" value="562"/>
</dbReference>
<dbReference type="STRING" id="6238.Q60V67"/>
<dbReference type="WormBase" id="CBG19679">
    <property type="protein sequence ID" value="CBP44235"/>
    <property type="gene ID" value="WBGene00038854"/>
    <property type="gene designation" value="Cbr-jhdm-1"/>
</dbReference>
<dbReference type="eggNOG" id="KOG1633">
    <property type="taxonomic scope" value="Eukaryota"/>
</dbReference>
<dbReference type="HOGENOM" id="CLU_286864_0_0_1"/>
<dbReference type="InParanoid" id="Q60V67"/>
<dbReference type="OMA" id="DPRMEMM"/>
<dbReference type="Proteomes" id="UP000008549">
    <property type="component" value="Unassembled WGS sequence"/>
</dbReference>
<dbReference type="GO" id="GO:0005634">
    <property type="term" value="C:nucleus"/>
    <property type="evidence" value="ECO:0007669"/>
    <property type="project" value="UniProtKB-SubCell"/>
</dbReference>
<dbReference type="GO" id="GO:0032452">
    <property type="term" value="F:histone demethylase activity"/>
    <property type="evidence" value="ECO:0000318"/>
    <property type="project" value="GO_Central"/>
</dbReference>
<dbReference type="GO" id="GO:0140680">
    <property type="term" value="F:histone H3K36me/H3K36me2 demethylase activity"/>
    <property type="evidence" value="ECO:0007669"/>
    <property type="project" value="UniProtKB-EC"/>
</dbReference>
<dbReference type="GO" id="GO:0046872">
    <property type="term" value="F:metal ion binding"/>
    <property type="evidence" value="ECO:0007669"/>
    <property type="project" value="UniProtKB-KW"/>
</dbReference>
<dbReference type="GO" id="GO:0003712">
    <property type="term" value="F:transcription coregulator activity"/>
    <property type="evidence" value="ECO:0000318"/>
    <property type="project" value="GO_Central"/>
</dbReference>
<dbReference type="GO" id="GO:0006338">
    <property type="term" value="P:chromatin remodeling"/>
    <property type="evidence" value="ECO:0000318"/>
    <property type="project" value="GO_Central"/>
</dbReference>
<dbReference type="GO" id="GO:0006357">
    <property type="term" value="P:regulation of transcription by RNA polymerase II"/>
    <property type="evidence" value="ECO:0000318"/>
    <property type="project" value="GO_Central"/>
</dbReference>
<dbReference type="Gene3D" id="2.60.120.650">
    <property type="entry name" value="Cupin"/>
    <property type="match status" value="1"/>
</dbReference>
<dbReference type="InterPro" id="IPR041667">
    <property type="entry name" value="Cupin_8"/>
</dbReference>
<dbReference type="InterPro" id="IPR050690">
    <property type="entry name" value="JHDM1_Histone_Demethylase"/>
</dbReference>
<dbReference type="InterPro" id="IPR003347">
    <property type="entry name" value="JmjC_dom"/>
</dbReference>
<dbReference type="PANTHER" id="PTHR23123">
    <property type="entry name" value="PHD/F-BOX CONTAINING PROTEIN"/>
    <property type="match status" value="1"/>
</dbReference>
<dbReference type="Pfam" id="PF13621">
    <property type="entry name" value="Cupin_8"/>
    <property type="match status" value="1"/>
</dbReference>
<dbReference type="SMART" id="SM00558">
    <property type="entry name" value="JmjC"/>
    <property type="match status" value="1"/>
</dbReference>
<dbReference type="SUPFAM" id="SSF51197">
    <property type="entry name" value="Clavaminate synthase-like"/>
    <property type="match status" value="1"/>
</dbReference>
<dbReference type="PROSITE" id="PS51184">
    <property type="entry name" value="JMJC"/>
    <property type="match status" value="1"/>
</dbReference>